<feature type="chain" id="PRO_1000139389" description="CTP synthase">
    <location>
        <begin position="1"/>
        <end position="548"/>
    </location>
</feature>
<feature type="domain" description="Glutamine amidotransferase type-1" evidence="1">
    <location>
        <begin position="295"/>
        <end position="545"/>
    </location>
</feature>
<feature type="region of interest" description="Amidoligase domain" evidence="1">
    <location>
        <begin position="1"/>
        <end position="270"/>
    </location>
</feature>
<feature type="active site" description="Nucleophile; for glutamine hydrolysis" evidence="1">
    <location>
        <position position="383"/>
    </location>
</feature>
<feature type="active site" evidence="1">
    <location>
        <position position="518"/>
    </location>
</feature>
<feature type="active site" evidence="1">
    <location>
        <position position="520"/>
    </location>
</feature>
<feature type="binding site" evidence="1">
    <location>
        <position position="13"/>
    </location>
    <ligand>
        <name>CTP</name>
        <dbReference type="ChEBI" id="CHEBI:37563"/>
        <note>allosteric inhibitor</note>
    </ligand>
</feature>
<feature type="binding site" evidence="1">
    <location>
        <position position="13"/>
    </location>
    <ligand>
        <name>UTP</name>
        <dbReference type="ChEBI" id="CHEBI:46398"/>
    </ligand>
</feature>
<feature type="binding site" evidence="1">
    <location>
        <begin position="14"/>
        <end position="19"/>
    </location>
    <ligand>
        <name>ATP</name>
        <dbReference type="ChEBI" id="CHEBI:30616"/>
    </ligand>
</feature>
<feature type="binding site" evidence="1">
    <location>
        <position position="71"/>
    </location>
    <ligand>
        <name>ATP</name>
        <dbReference type="ChEBI" id="CHEBI:30616"/>
    </ligand>
</feature>
<feature type="binding site" evidence="1">
    <location>
        <position position="71"/>
    </location>
    <ligand>
        <name>Mg(2+)</name>
        <dbReference type="ChEBI" id="CHEBI:18420"/>
    </ligand>
</feature>
<feature type="binding site" evidence="1">
    <location>
        <position position="144"/>
    </location>
    <ligand>
        <name>Mg(2+)</name>
        <dbReference type="ChEBI" id="CHEBI:18420"/>
    </ligand>
</feature>
<feature type="binding site" evidence="1">
    <location>
        <begin position="151"/>
        <end position="153"/>
    </location>
    <ligand>
        <name>CTP</name>
        <dbReference type="ChEBI" id="CHEBI:37563"/>
        <note>allosteric inhibitor</note>
    </ligand>
</feature>
<feature type="binding site" evidence="1">
    <location>
        <begin position="191"/>
        <end position="196"/>
    </location>
    <ligand>
        <name>CTP</name>
        <dbReference type="ChEBI" id="CHEBI:37563"/>
        <note>allosteric inhibitor</note>
    </ligand>
</feature>
<feature type="binding site" evidence="1">
    <location>
        <begin position="191"/>
        <end position="196"/>
    </location>
    <ligand>
        <name>UTP</name>
        <dbReference type="ChEBI" id="CHEBI:46398"/>
    </ligand>
</feature>
<feature type="binding site" evidence="1">
    <location>
        <position position="227"/>
    </location>
    <ligand>
        <name>CTP</name>
        <dbReference type="ChEBI" id="CHEBI:37563"/>
        <note>allosteric inhibitor</note>
    </ligand>
</feature>
<feature type="binding site" evidence="1">
    <location>
        <position position="227"/>
    </location>
    <ligand>
        <name>UTP</name>
        <dbReference type="ChEBI" id="CHEBI:46398"/>
    </ligand>
</feature>
<feature type="binding site" evidence="1">
    <location>
        <position position="356"/>
    </location>
    <ligand>
        <name>L-glutamine</name>
        <dbReference type="ChEBI" id="CHEBI:58359"/>
    </ligand>
</feature>
<feature type="binding site" evidence="1">
    <location>
        <begin position="384"/>
        <end position="387"/>
    </location>
    <ligand>
        <name>L-glutamine</name>
        <dbReference type="ChEBI" id="CHEBI:58359"/>
    </ligand>
</feature>
<feature type="binding site" evidence="1">
    <location>
        <position position="407"/>
    </location>
    <ligand>
        <name>L-glutamine</name>
        <dbReference type="ChEBI" id="CHEBI:58359"/>
    </ligand>
</feature>
<feature type="binding site" evidence="1">
    <location>
        <position position="473"/>
    </location>
    <ligand>
        <name>L-glutamine</name>
        <dbReference type="ChEBI" id="CHEBI:58359"/>
    </ligand>
</feature>
<comment type="function">
    <text evidence="1">Catalyzes the ATP-dependent amination of UTP to CTP with either L-glutamine or ammonia as the source of nitrogen. Regulates intracellular CTP levels through interactions with the four ribonucleotide triphosphates.</text>
</comment>
<comment type="catalytic activity">
    <reaction evidence="1">
        <text>UTP + L-glutamine + ATP + H2O = CTP + L-glutamate + ADP + phosphate + 2 H(+)</text>
        <dbReference type="Rhea" id="RHEA:26426"/>
        <dbReference type="ChEBI" id="CHEBI:15377"/>
        <dbReference type="ChEBI" id="CHEBI:15378"/>
        <dbReference type="ChEBI" id="CHEBI:29985"/>
        <dbReference type="ChEBI" id="CHEBI:30616"/>
        <dbReference type="ChEBI" id="CHEBI:37563"/>
        <dbReference type="ChEBI" id="CHEBI:43474"/>
        <dbReference type="ChEBI" id="CHEBI:46398"/>
        <dbReference type="ChEBI" id="CHEBI:58359"/>
        <dbReference type="ChEBI" id="CHEBI:456216"/>
        <dbReference type="EC" id="6.3.4.2"/>
    </reaction>
</comment>
<comment type="catalytic activity">
    <reaction evidence="1">
        <text>L-glutamine + H2O = L-glutamate + NH4(+)</text>
        <dbReference type="Rhea" id="RHEA:15889"/>
        <dbReference type="ChEBI" id="CHEBI:15377"/>
        <dbReference type="ChEBI" id="CHEBI:28938"/>
        <dbReference type="ChEBI" id="CHEBI:29985"/>
        <dbReference type="ChEBI" id="CHEBI:58359"/>
    </reaction>
</comment>
<comment type="catalytic activity">
    <reaction evidence="1">
        <text>UTP + NH4(+) + ATP = CTP + ADP + phosphate + 2 H(+)</text>
        <dbReference type="Rhea" id="RHEA:16597"/>
        <dbReference type="ChEBI" id="CHEBI:15378"/>
        <dbReference type="ChEBI" id="CHEBI:28938"/>
        <dbReference type="ChEBI" id="CHEBI:30616"/>
        <dbReference type="ChEBI" id="CHEBI:37563"/>
        <dbReference type="ChEBI" id="CHEBI:43474"/>
        <dbReference type="ChEBI" id="CHEBI:46398"/>
        <dbReference type="ChEBI" id="CHEBI:456216"/>
    </reaction>
</comment>
<comment type="activity regulation">
    <text evidence="1">Allosterically activated by GTP, when glutamine is the substrate; GTP has no effect on the reaction when ammonia is the substrate. The allosteric effector GTP functions by stabilizing the protein conformation that binds the tetrahedral intermediate(s) formed during glutamine hydrolysis. Inhibited by the product CTP, via allosteric rather than competitive inhibition.</text>
</comment>
<comment type="pathway">
    <text evidence="1">Pyrimidine metabolism; CTP biosynthesis via de novo pathway; CTP from UDP: step 2/2.</text>
</comment>
<comment type="subunit">
    <text evidence="1">Homotetramer.</text>
</comment>
<comment type="miscellaneous">
    <text evidence="1">CTPSs have evolved a hybrid strategy for distinguishing between UTP and CTP. The overlapping regions of the product feedback inhibitory and substrate sites recognize a common feature in both compounds, the triphosphate moiety. To differentiate isosteric substrate and product pyrimidine rings, an additional pocket far from the expected kinase/ligase catalytic site, specifically recognizes the cytosine and ribose portions of the product inhibitor.</text>
</comment>
<comment type="similarity">
    <text evidence="1">Belongs to the CTP synthase family.</text>
</comment>
<name>PYRG_BORPD</name>
<evidence type="ECO:0000255" key="1">
    <source>
        <dbReference type="HAMAP-Rule" id="MF_01227"/>
    </source>
</evidence>
<organism>
    <name type="scientific">Bordetella petrii (strain ATCC BAA-461 / DSM 12804 / CCUG 43448)</name>
    <dbReference type="NCBI Taxonomy" id="340100"/>
    <lineage>
        <taxon>Bacteria</taxon>
        <taxon>Pseudomonadati</taxon>
        <taxon>Pseudomonadota</taxon>
        <taxon>Betaproteobacteria</taxon>
        <taxon>Burkholderiales</taxon>
        <taxon>Alcaligenaceae</taxon>
        <taxon>Bordetella</taxon>
    </lineage>
</organism>
<accession>A9IIP5</accession>
<proteinExistence type="inferred from homology"/>
<dbReference type="EC" id="6.3.4.2" evidence="1"/>
<dbReference type="EMBL" id="AM902716">
    <property type="protein sequence ID" value="CAP42139.1"/>
    <property type="molecule type" value="Genomic_DNA"/>
</dbReference>
<dbReference type="SMR" id="A9IIP5"/>
<dbReference type="STRING" id="94624.Bpet1800"/>
<dbReference type="MEROPS" id="C26.964"/>
<dbReference type="KEGG" id="bpt:Bpet1800"/>
<dbReference type="eggNOG" id="COG0504">
    <property type="taxonomic scope" value="Bacteria"/>
</dbReference>
<dbReference type="UniPathway" id="UPA00159">
    <property type="reaction ID" value="UER00277"/>
</dbReference>
<dbReference type="Proteomes" id="UP000001225">
    <property type="component" value="Chromosome"/>
</dbReference>
<dbReference type="GO" id="GO:0005829">
    <property type="term" value="C:cytosol"/>
    <property type="evidence" value="ECO:0007669"/>
    <property type="project" value="TreeGrafter"/>
</dbReference>
<dbReference type="GO" id="GO:0005524">
    <property type="term" value="F:ATP binding"/>
    <property type="evidence" value="ECO:0007669"/>
    <property type="project" value="UniProtKB-KW"/>
</dbReference>
<dbReference type="GO" id="GO:0003883">
    <property type="term" value="F:CTP synthase activity"/>
    <property type="evidence" value="ECO:0007669"/>
    <property type="project" value="UniProtKB-UniRule"/>
</dbReference>
<dbReference type="GO" id="GO:0004359">
    <property type="term" value="F:glutaminase activity"/>
    <property type="evidence" value="ECO:0007669"/>
    <property type="project" value="RHEA"/>
</dbReference>
<dbReference type="GO" id="GO:0042802">
    <property type="term" value="F:identical protein binding"/>
    <property type="evidence" value="ECO:0007669"/>
    <property type="project" value="TreeGrafter"/>
</dbReference>
<dbReference type="GO" id="GO:0046872">
    <property type="term" value="F:metal ion binding"/>
    <property type="evidence" value="ECO:0007669"/>
    <property type="project" value="UniProtKB-KW"/>
</dbReference>
<dbReference type="GO" id="GO:0044210">
    <property type="term" value="P:'de novo' CTP biosynthetic process"/>
    <property type="evidence" value="ECO:0007669"/>
    <property type="project" value="UniProtKB-UniRule"/>
</dbReference>
<dbReference type="GO" id="GO:0019856">
    <property type="term" value="P:pyrimidine nucleobase biosynthetic process"/>
    <property type="evidence" value="ECO:0007669"/>
    <property type="project" value="TreeGrafter"/>
</dbReference>
<dbReference type="CDD" id="cd03113">
    <property type="entry name" value="CTPS_N"/>
    <property type="match status" value="1"/>
</dbReference>
<dbReference type="CDD" id="cd01746">
    <property type="entry name" value="GATase1_CTP_Synthase"/>
    <property type="match status" value="1"/>
</dbReference>
<dbReference type="FunFam" id="3.40.50.300:FF:000009">
    <property type="entry name" value="CTP synthase"/>
    <property type="match status" value="1"/>
</dbReference>
<dbReference type="FunFam" id="3.40.50.880:FF:000002">
    <property type="entry name" value="CTP synthase"/>
    <property type="match status" value="1"/>
</dbReference>
<dbReference type="Gene3D" id="3.40.50.880">
    <property type="match status" value="1"/>
</dbReference>
<dbReference type="Gene3D" id="3.40.50.300">
    <property type="entry name" value="P-loop containing nucleotide triphosphate hydrolases"/>
    <property type="match status" value="1"/>
</dbReference>
<dbReference type="HAMAP" id="MF_01227">
    <property type="entry name" value="PyrG"/>
    <property type="match status" value="1"/>
</dbReference>
<dbReference type="InterPro" id="IPR029062">
    <property type="entry name" value="Class_I_gatase-like"/>
</dbReference>
<dbReference type="InterPro" id="IPR004468">
    <property type="entry name" value="CTP_synthase"/>
</dbReference>
<dbReference type="InterPro" id="IPR017456">
    <property type="entry name" value="CTP_synthase_N"/>
</dbReference>
<dbReference type="InterPro" id="IPR017926">
    <property type="entry name" value="GATASE"/>
</dbReference>
<dbReference type="InterPro" id="IPR033828">
    <property type="entry name" value="GATase1_CTP_Synthase"/>
</dbReference>
<dbReference type="InterPro" id="IPR027417">
    <property type="entry name" value="P-loop_NTPase"/>
</dbReference>
<dbReference type="NCBIfam" id="NF003792">
    <property type="entry name" value="PRK05380.1"/>
    <property type="match status" value="1"/>
</dbReference>
<dbReference type="NCBIfam" id="TIGR00337">
    <property type="entry name" value="PyrG"/>
    <property type="match status" value="1"/>
</dbReference>
<dbReference type="PANTHER" id="PTHR11550">
    <property type="entry name" value="CTP SYNTHASE"/>
    <property type="match status" value="1"/>
</dbReference>
<dbReference type="PANTHER" id="PTHR11550:SF0">
    <property type="entry name" value="CTP SYNTHASE-RELATED"/>
    <property type="match status" value="1"/>
</dbReference>
<dbReference type="Pfam" id="PF06418">
    <property type="entry name" value="CTP_synth_N"/>
    <property type="match status" value="1"/>
</dbReference>
<dbReference type="Pfam" id="PF00117">
    <property type="entry name" value="GATase"/>
    <property type="match status" value="1"/>
</dbReference>
<dbReference type="SUPFAM" id="SSF52317">
    <property type="entry name" value="Class I glutamine amidotransferase-like"/>
    <property type="match status" value="1"/>
</dbReference>
<dbReference type="SUPFAM" id="SSF52540">
    <property type="entry name" value="P-loop containing nucleoside triphosphate hydrolases"/>
    <property type="match status" value="1"/>
</dbReference>
<dbReference type="PROSITE" id="PS51273">
    <property type="entry name" value="GATASE_TYPE_1"/>
    <property type="match status" value="1"/>
</dbReference>
<keyword id="KW-0067">ATP-binding</keyword>
<keyword id="KW-0315">Glutamine amidotransferase</keyword>
<keyword id="KW-0436">Ligase</keyword>
<keyword id="KW-0460">Magnesium</keyword>
<keyword id="KW-0479">Metal-binding</keyword>
<keyword id="KW-0547">Nucleotide-binding</keyword>
<keyword id="KW-0665">Pyrimidine biosynthesis</keyword>
<gene>
    <name evidence="1" type="primary">pyrG</name>
    <name type="ordered locus">Bpet1800</name>
</gene>
<reference key="1">
    <citation type="journal article" date="2008" name="BMC Genomics">
        <title>The missing link: Bordetella petrii is endowed with both the metabolic versatility of environmental bacteria and virulence traits of pathogenic Bordetellae.</title>
        <authorList>
            <person name="Gross R."/>
            <person name="Guzman C.A."/>
            <person name="Sebaihia M."/>
            <person name="Martin dos Santos V.A.P."/>
            <person name="Pieper D.H."/>
            <person name="Koebnik R."/>
            <person name="Lechner M."/>
            <person name="Bartels D."/>
            <person name="Buhrmester J."/>
            <person name="Choudhuri J.V."/>
            <person name="Ebensen T."/>
            <person name="Gaigalat L."/>
            <person name="Herrmann S."/>
            <person name="Khachane A.N."/>
            <person name="Larisch C."/>
            <person name="Link S."/>
            <person name="Linke B."/>
            <person name="Meyer F."/>
            <person name="Mormann S."/>
            <person name="Nakunst D."/>
            <person name="Rueckert C."/>
            <person name="Schneiker-Bekel S."/>
            <person name="Schulze K."/>
            <person name="Voerholter F.-J."/>
            <person name="Yevsa T."/>
            <person name="Engle J.T."/>
            <person name="Goldman W.E."/>
            <person name="Puehler A."/>
            <person name="Goebel U.B."/>
            <person name="Goesmann A."/>
            <person name="Bloecker H."/>
            <person name="Kaiser O."/>
            <person name="Martinez-Arias R."/>
        </authorList>
    </citation>
    <scope>NUCLEOTIDE SEQUENCE [LARGE SCALE GENOMIC DNA]</scope>
    <source>
        <strain>ATCC BAA-461 / DSM 12804 / CCUG 43448</strain>
    </source>
</reference>
<sequence length="548" mass="60169">MTKYVFVTGGVVSSLGKGIAAASLAAILESRGLQVTLLKLDPYINVDPGTMSPFQHGEVFVTEDGAETDLDLGHYERFISAKMHKVNNFTTGQIYESVLRKERRGDYLGKTVQVIPHITNEIQDFIARGADAAWNGATDVAIVEIGGTVGDIESLPFLEAARQMSLRLGRNNAAFVHLTLVPFIASAGELKTKPTQHSVQKLREIGIYPNLLLCRADRPIPDDERAKISMFSNVPLDAVISVWDADSIYKIPAMLHKQGVDNIVCEALGLTPPPADLSMWDNLVDALEHPTHQLTIGMVGKYVDLTESYKSLSEALVHAGIHTRSKINIEYIDSEDIETRGTDQLKHLDAILVPGGFGKRGTEGKIAAIRYARENGVPYLGICLGMQLAVIEFARHVAGLGGANSTEFDPSAPHPVVALITEWMDREGKVEKRDATSDLGGTMRKGAQRCPVKPGTRAQAIYGDDVNERHRHRYEVNNVYVPRLEEAGMVISARTPTENLPEMMELPDHPWFVGVQFHPEFTSTPRDGHPLFSSFIEAAIANHARKEA</sequence>
<protein>
    <recommendedName>
        <fullName evidence="1">CTP synthase</fullName>
        <ecNumber evidence="1">6.3.4.2</ecNumber>
    </recommendedName>
    <alternativeName>
        <fullName evidence="1">Cytidine 5'-triphosphate synthase</fullName>
    </alternativeName>
    <alternativeName>
        <fullName evidence="1">Cytidine triphosphate synthetase</fullName>
        <shortName evidence="1">CTP synthetase</shortName>
        <shortName evidence="1">CTPS</shortName>
    </alternativeName>
    <alternativeName>
        <fullName evidence="1">UTP--ammonia ligase</fullName>
    </alternativeName>
</protein>